<protein>
    <recommendedName>
        <fullName evidence="1">UPF0208 membrane protein YfbV</fullName>
    </recommendedName>
</protein>
<sequence length="151" mass="17201">MSTPDNRSVNFFSLFRRGQHYAKTWPMEKRLAPVFVENRVIRMTRYAIRFMPPVAVFTLCWQIALGGQLGPAVATALFALSLPMQGLWWLGKRSVTPLPPSILNWFYEVRGKLQEAGQALAPVEGKPDYQALADTLKRAFKQLDKTFLDDL</sequence>
<dbReference type="EMBL" id="AM933172">
    <property type="protein sequence ID" value="CAR33902.1"/>
    <property type="molecule type" value="Genomic_DNA"/>
</dbReference>
<dbReference type="RefSeq" id="WP_000106617.1">
    <property type="nucleotide sequence ID" value="NC_011294.1"/>
</dbReference>
<dbReference type="KEGG" id="set:SEN2318"/>
<dbReference type="HOGENOM" id="CLU_128746_0_0_6"/>
<dbReference type="Proteomes" id="UP000000613">
    <property type="component" value="Chromosome"/>
</dbReference>
<dbReference type="GO" id="GO:0005886">
    <property type="term" value="C:plasma membrane"/>
    <property type="evidence" value="ECO:0007669"/>
    <property type="project" value="UniProtKB-SubCell"/>
</dbReference>
<dbReference type="HAMAP" id="MF_01101">
    <property type="entry name" value="UPF0208"/>
    <property type="match status" value="1"/>
</dbReference>
<dbReference type="InterPro" id="IPR007334">
    <property type="entry name" value="UPF0208"/>
</dbReference>
<dbReference type="NCBIfam" id="NF002493">
    <property type="entry name" value="PRK01816.1"/>
    <property type="match status" value="1"/>
</dbReference>
<dbReference type="Pfam" id="PF04217">
    <property type="entry name" value="DUF412"/>
    <property type="match status" value="1"/>
</dbReference>
<feature type="chain" id="PRO_1000136997" description="UPF0208 membrane protein YfbV">
    <location>
        <begin position="1"/>
        <end position="151"/>
    </location>
</feature>
<feature type="transmembrane region" description="Helical" evidence="1">
    <location>
        <begin position="46"/>
        <end position="65"/>
    </location>
</feature>
<feature type="transmembrane region" description="Helical" evidence="1">
    <location>
        <begin position="69"/>
        <end position="91"/>
    </location>
</feature>
<accession>B5R317</accession>
<reference key="1">
    <citation type="journal article" date="2008" name="Genome Res.">
        <title>Comparative genome analysis of Salmonella enteritidis PT4 and Salmonella gallinarum 287/91 provides insights into evolutionary and host adaptation pathways.</title>
        <authorList>
            <person name="Thomson N.R."/>
            <person name="Clayton D.J."/>
            <person name="Windhorst D."/>
            <person name="Vernikos G."/>
            <person name="Davidson S."/>
            <person name="Churcher C."/>
            <person name="Quail M.A."/>
            <person name="Stevens M."/>
            <person name="Jones M.A."/>
            <person name="Watson M."/>
            <person name="Barron A."/>
            <person name="Layton A."/>
            <person name="Pickard D."/>
            <person name="Kingsley R.A."/>
            <person name="Bignell A."/>
            <person name="Clark L."/>
            <person name="Harris B."/>
            <person name="Ormond D."/>
            <person name="Abdellah Z."/>
            <person name="Brooks K."/>
            <person name="Cherevach I."/>
            <person name="Chillingworth T."/>
            <person name="Woodward J."/>
            <person name="Norberczak H."/>
            <person name="Lord A."/>
            <person name="Arrowsmith C."/>
            <person name="Jagels K."/>
            <person name="Moule S."/>
            <person name="Mungall K."/>
            <person name="Saunders M."/>
            <person name="Whitehead S."/>
            <person name="Chabalgoity J.A."/>
            <person name="Maskell D."/>
            <person name="Humphreys T."/>
            <person name="Roberts M."/>
            <person name="Barrow P.A."/>
            <person name="Dougan G."/>
            <person name="Parkhill J."/>
        </authorList>
    </citation>
    <scope>NUCLEOTIDE SEQUENCE [LARGE SCALE GENOMIC DNA]</scope>
    <source>
        <strain>P125109</strain>
    </source>
</reference>
<name>YFBV_SALEP</name>
<comment type="subcellular location">
    <subcellularLocation>
        <location evidence="1">Cell inner membrane</location>
        <topology evidence="1">Multi-pass membrane protein</topology>
    </subcellularLocation>
</comment>
<comment type="similarity">
    <text evidence="1">Belongs to the UPF0208 family.</text>
</comment>
<evidence type="ECO:0000255" key="1">
    <source>
        <dbReference type="HAMAP-Rule" id="MF_01101"/>
    </source>
</evidence>
<gene>
    <name evidence="1" type="primary">yfbV</name>
    <name type="ordered locus">SEN2318</name>
</gene>
<proteinExistence type="inferred from homology"/>
<keyword id="KW-0997">Cell inner membrane</keyword>
<keyword id="KW-1003">Cell membrane</keyword>
<keyword id="KW-0472">Membrane</keyword>
<keyword id="KW-0812">Transmembrane</keyword>
<keyword id="KW-1133">Transmembrane helix</keyword>
<organism>
    <name type="scientific">Salmonella enteritidis PT4 (strain P125109)</name>
    <dbReference type="NCBI Taxonomy" id="550537"/>
    <lineage>
        <taxon>Bacteria</taxon>
        <taxon>Pseudomonadati</taxon>
        <taxon>Pseudomonadota</taxon>
        <taxon>Gammaproteobacteria</taxon>
        <taxon>Enterobacterales</taxon>
        <taxon>Enterobacteriaceae</taxon>
        <taxon>Salmonella</taxon>
    </lineage>
</organism>